<comment type="function">
    <text evidence="1">Binds to 23S rRNA.</text>
</comment>
<comment type="subunit">
    <text evidence="1">Part of the 50S ribosomal subunit.</text>
</comment>
<comment type="subcellular location">
    <subcellularLocation>
        <location>Plastid</location>
        <location>Chloroplast</location>
    </subcellularLocation>
</comment>
<comment type="similarity">
    <text evidence="1">Belongs to the universal ribosomal protein uL14 family.</text>
</comment>
<dbReference type="EMBL" id="DQ887677">
    <property type="protein sequence ID" value="ABI14508.1"/>
    <property type="molecule type" value="Genomic_DNA"/>
</dbReference>
<dbReference type="RefSeq" id="YP_784510.1">
    <property type="nucleotide sequence ID" value="NC_008457.1"/>
</dbReference>
<dbReference type="SMR" id="Q06GM3"/>
<dbReference type="GeneID" id="4363655"/>
<dbReference type="GO" id="GO:0009507">
    <property type="term" value="C:chloroplast"/>
    <property type="evidence" value="ECO:0007669"/>
    <property type="project" value="UniProtKB-SubCell"/>
</dbReference>
<dbReference type="GO" id="GO:0022625">
    <property type="term" value="C:cytosolic large ribosomal subunit"/>
    <property type="evidence" value="ECO:0007669"/>
    <property type="project" value="TreeGrafter"/>
</dbReference>
<dbReference type="GO" id="GO:0070180">
    <property type="term" value="F:large ribosomal subunit rRNA binding"/>
    <property type="evidence" value="ECO:0007669"/>
    <property type="project" value="TreeGrafter"/>
</dbReference>
<dbReference type="GO" id="GO:0003735">
    <property type="term" value="F:structural constituent of ribosome"/>
    <property type="evidence" value="ECO:0007669"/>
    <property type="project" value="InterPro"/>
</dbReference>
<dbReference type="GO" id="GO:0006412">
    <property type="term" value="P:translation"/>
    <property type="evidence" value="ECO:0007669"/>
    <property type="project" value="UniProtKB-UniRule"/>
</dbReference>
<dbReference type="CDD" id="cd00337">
    <property type="entry name" value="Ribosomal_uL14"/>
    <property type="match status" value="1"/>
</dbReference>
<dbReference type="FunFam" id="2.40.150.20:FF:000002">
    <property type="entry name" value="50S ribosomal protein L14, chloroplastic"/>
    <property type="match status" value="1"/>
</dbReference>
<dbReference type="Gene3D" id="2.40.150.20">
    <property type="entry name" value="Ribosomal protein L14"/>
    <property type="match status" value="1"/>
</dbReference>
<dbReference type="HAMAP" id="MF_01367">
    <property type="entry name" value="Ribosomal_uL14"/>
    <property type="match status" value="1"/>
</dbReference>
<dbReference type="InterPro" id="IPR000218">
    <property type="entry name" value="Ribosomal_uL14"/>
</dbReference>
<dbReference type="InterPro" id="IPR005745">
    <property type="entry name" value="Ribosomal_uL14_bac-type"/>
</dbReference>
<dbReference type="InterPro" id="IPR019972">
    <property type="entry name" value="Ribosomal_uL14_CS"/>
</dbReference>
<dbReference type="InterPro" id="IPR036853">
    <property type="entry name" value="Ribosomal_uL14_sf"/>
</dbReference>
<dbReference type="NCBIfam" id="TIGR01067">
    <property type="entry name" value="rplN_bact"/>
    <property type="match status" value="1"/>
</dbReference>
<dbReference type="PANTHER" id="PTHR11761">
    <property type="entry name" value="50S/60S RIBOSOMAL PROTEIN L14/L23"/>
    <property type="match status" value="1"/>
</dbReference>
<dbReference type="PANTHER" id="PTHR11761:SF3">
    <property type="entry name" value="LARGE RIBOSOMAL SUBUNIT PROTEIN UL14M"/>
    <property type="match status" value="1"/>
</dbReference>
<dbReference type="Pfam" id="PF00238">
    <property type="entry name" value="Ribosomal_L14"/>
    <property type="match status" value="1"/>
</dbReference>
<dbReference type="SMART" id="SM01374">
    <property type="entry name" value="Ribosomal_L14"/>
    <property type="match status" value="1"/>
</dbReference>
<dbReference type="SUPFAM" id="SSF50193">
    <property type="entry name" value="Ribosomal protein L14"/>
    <property type="match status" value="1"/>
</dbReference>
<dbReference type="PROSITE" id="PS00049">
    <property type="entry name" value="RIBOSOMAL_L14"/>
    <property type="match status" value="1"/>
</dbReference>
<sequence>MIQTQTYLNVADNSGARELMCIRILGASNRRYANIGDIIVAVIKEAVPNMPLERSEVIRAVIVRTCKELKRDNGMIIRYDDNAAVVIDQEGNPKGTRVFGAIARELRQLNFTKIVSLAPEVL</sequence>
<gene>
    <name evidence="1" type="primary">rpl14</name>
</gene>
<name>RK14_PIPCE</name>
<organism>
    <name type="scientific">Piper cenocladum</name>
    <name type="common">Ant piper</name>
    <dbReference type="NCBI Taxonomy" id="398741"/>
    <lineage>
        <taxon>Eukaryota</taxon>
        <taxon>Viridiplantae</taxon>
        <taxon>Streptophyta</taxon>
        <taxon>Embryophyta</taxon>
        <taxon>Tracheophyta</taxon>
        <taxon>Spermatophyta</taxon>
        <taxon>Magnoliopsida</taxon>
        <taxon>Magnoliidae</taxon>
        <taxon>Piperales</taxon>
        <taxon>Piperaceae</taxon>
        <taxon>Piper</taxon>
    </lineage>
</organism>
<geneLocation type="chloroplast"/>
<protein>
    <recommendedName>
        <fullName evidence="1">Large ribosomal subunit protein uL14c</fullName>
    </recommendedName>
    <alternativeName>
        <fullName evidence="2">50S ribosomal protein L14, chloroplastic</fullName>
    </alternativeName>
</protein>
<reference key="1">
    <citation type="journal article" date="2006" name="BMC Evol. Biol.">
        <title>Complete plastid genome sequences of Drimys, Liriodendron, and Piper: implications for the phylogenetic relationships of magnoliids.</title>
        <authorList>
            <person name="Cai Z."/>
            <person name="Penaflor C."/>
            <person name="Kuehl J.V."/>
            <person name="Leebens-Mack J."/>
            <person name="Carlson J.E."/>
            <person name="dePamphilis C.W."/>
            <person name="Boore J.L."/>
            <person name="Jansen R.K."/>
        </authorList>
    </citation>
    <scope>NUCLEOTIDE SEQUENCE [LARGE SCALE GENOMIC DNA]</scope>
</reference>
<keyword id="KW-0150">Chloroplast</keyword>
<keyword id="KW-0934">Plastid</keyword>
<keyword id="KW-0687">Ribonucleoprotein</keyword>
<keyword id="KW-0689">Ribosomal protein</keyword>
<keyword id="KW-0694">RNA-binding</keyword>
<keyword id="KW-0699">rRNA-binding</keyword>
<proteinExistence type="inferred from homology"/>
<feature type="chain" id="PRO_0000276361" description="Large ribosomal subunit protein uL14c">
    <location>
        <begin position="1"/>
        <end position="122"/>
    </location>
</feature>
<evidence type="ECO:0000255" key="1">
    <source>
        <dbReference type="HAMAP-Rule" id="MF_01367"/>
    </source>
</evidence>
<evidence type="ECO:0000305" key="2"/>
<accession>Q06GM3</accession>